<dbReference type="EMBL" id="CP000411">
    <property type="protein sequence ID" value="ABJ57182.1"/>
    <property type="molecule type" value="Genomic_DNA"/>
</dbReference>
<dbReference type="RefSeq" id="WP_002823439.1">
    <property type="nucleotide sequence ID" value="NC_008528.1"/>
</dbReference>
<dbReference type="SMR" id="Q04EE0"/>
<dbReference type="STRING" id="203123.OEOE_1310"/>
<dbReference type="KEGG" id="ooe:OEOE_1310"/>
<dbReference type="PATRIC" id="fig|203123.7.peg.1324"/>
<dbReference type="eggNOG" id="COG0576">
    <property type="taxonomic scope" value="Bacteria"/>
</dbReference>
<dbReference type="HOGENOM" id="CLU_057217_6_3_9"/>
<dbReference type="Proteomes" id="UP000000774">
    <property type="component" value="Chromosome"/>
</dbReference>
<dbReference type="GO" id="GO:0005737">
    <property type="term" value="C:cytoplasm"/>
    <property type="evidence" value="ECO:0007669"/>
    <property type="project" value="UniProtKB-SubCell"/>
</dbReference>
<dbReference type="GO" id="GO:0000774">
    <property type="term" value="F:adenyl-nucleotide exchange factor activity"/>
    <property type="evidence" value="ECO:0007669"/>
    <property type="project" value="InterPro"/>
</dbReference>
<dbReference type="GO" id="GO:0042803">
    <property type="term" value="F:protein homodimerization activity"/>
    <property type="evidence" value="ECO:0007669"/>
    <property type="project" value="InterPro"/>
</dbReference>
<dbReference type="GO" id="GO:0051087">
    <property type="term" value="F:protein-folding chaperone binding"/>
    <property type="evidence" value="ECO:0007669"/>
    <property type="project" value="InterPro"/>
</dbReference>
<dbReference type="GO" id="GO:0051082">
    <property type="term" value="F:unfolded protein binding"/>
    <property type="evidence" value="ECO:0007669"/>
    <property type="project" value="TreeGrafter"/>
</dbReference>
<dbReference type="GO" id="GO:0006457">
    <property type="term" value="P:protein folding"/>
    <property type="evidence" value="ECO:0007669"/>
    <property type="project" value="InterPro"/>
</dbReference>
<dbReference type="CDD" id="cd00446">
    <property type="entry name" value="GrpE"/>
    <property type="match status" value="1"/>
</dbReference>
<dbReference type="FunFam" id="2.30.22.10:FF:000001">
    <property type="entry name" value="Protein GrpE"/>
    <property type="match status" value="1"/>
</dbReference>
<dbReference type="Gene3D" id="3.90.20.20">
    <property type="match status" value="1"/>
</dbReference>
<dbReference type="Gene3D" id="2.30.22.10">
    <property type="entry name" value="Head domain of nucleotide exchange factor GrpE"/>
    <property type="match status" value="1"/>
</dbReference>
<dbReference type="HAMAP" id="MF_01151">
    <property type="entry name" value="GrpE"/>
    <property type="match status" value="1"/>
</dbReference>
<dbReference type="InterPro" id="IPR000740">
    <property type="entry name" value="GrpE"/>
</dbReference>
<dbReference type="InterPro" id="IPR013805">
    <property type="entry name" value="GrpE_coiled_coil"/>
</dbReference>
<dbReference type="InterPro" id="IPR009012">
    <property type="entry name" value="GrpE_head"/>
</dbReference>
<dbReference type="NCBIfam" id="NF010738">
    <property type="entry name" value="PRK14140.1"/>
    <property type="match status" value="1"/>
</dbReference>
<dbReference type="NCBIfam" id="NF010759">
    <property type="entry name" value="PRK14162.1"/>
    <property type="match status" value="1"/>
</dbReference>
<dbReference type="PANTHER" id="PTHR21237">
    <property type="entry name" value="GRPE PROTEIN"/>
    <property type="match status" value="1"/>
</dbReference>
<dbReference type="PANTHER" id="PTHR21237:SF23">
    <property type="entry name" value="GRPE PROTEIN HOMOLOG, MITOCHONDRIAL"/>
    <property type="match status" value="1"/>
</dbReference>
<dbReference type="Pfam" id="PF01025">
    <property type="entry name" value="GrpE"/>
    <property type="match status" value="1"/>
</dbReference>
<dbReference type="PRINTS" id="PR00773">
    <property type="entry name" value="GRPEPROTEIN"/>
</dbReference>
<dbReference type="SUPFAM" id="SSF58014">
    <property type="entry name" value="Coiled-coil domain of nucleotide exchange factor GrpE"/>
    <property type="match status" value="1"/>
</dbReference>
<dbReference type="SUPFAM" id="SSF51064">
    <property type="entry name" value="Head domain of nucleotide exchange factor GrpE"/>
    <property type="match status" value="1"/>
</dbReference>
<comment type="function">
    <text evidence="1">Participates actively in the response to hyperosmotic and heat shock by preventing the aggregation of stress-denatured proteins, in association with DnaK and GrpE. It is the nucleotide exchange factor for DnaK and may function as a thermosensor. Unfolded proteins bind initially to DnaJ; upon interaction with the DnaJ-bound protein, DnaK hydrolyzes its bound ATP, resulting in the formation of a stable complex. GrpE releases ADP from DnaK; ATP binding to DnaK triggers the release of the substrate protein, thus completing the reaction cycle. Several rounds of ATP-dependent interactions between DnaJ, DnaK and GrpE are required for fully efficient folding.</text>
</comment>
<comment type="subunit">
    <text evidence="1">Homodimer.</text>
</comment>
<comment type="subcellular location">
    <subcellularLocation>
        <location evidence="1">Cytoplasm</location>
    </subcellularLocation>
</comment>
<comment type="similarity">
    <text evidence="1">Belongs to the GrpE family.</text>
</comment>
<protein>
    <recommendedName>
        <fullName evidence="1">Protein GrpE</fullName>
    </recommendedName>
    <alternativeName>
        <fullName evidence="1">HSP-70 cofactor</fullName>
    </alternativeName>
</protein>
<accession>Q04EE0</accession>
<gene>
    <name evidence="1" type="primary">grpE</name>
    <name type="ordered locus">OEOE_1310</name>
</gene>
<evidence type="ECO:0000255" key="1">
    <source>
        <dbReference type="HAMAP-Rule" id="MF_01151"/>
    </source>
</evidence>
<evidence type="ECO:0000256" key="2">
    <source>
        <dbReference type="SAM" id="MobiDB-lite"/>
    </source>
</evidence>
<name>GRPE_OENOB</name>
<reference key="1">
    <citation type="journal article" date="2006" name="Proc. Natl. Acad. Sci. U.S.A.">
        <title>Comparative genomics of the lactic acid bacteria.</title>
        <authorList>
            <person name="Makarova K.S."/>
            <person name="Slesarev A."/>
            <person name="Wolf Y.I."/>
            <person name="Sorokin A."/>
            <person name="Mirkin B."/>
            <person name="Koonin E.V."/>
            <person name="Pavlov A."/>
            <person name="Pavlova N."/>
            <person name="Karamychev V."/>
            <person name="Polouchine N."/>
            <person name="Shakhova V."/>
            <person name="Grigoriev I."/>
            <person name="Lou Y."/>
            <person name="Rohksar D."/>
            <person name="Lucas S."/>
            <person name="Huang K."/>
            <person name="Goodstein D.M."/>
            <person name="Hawkins T."/>
            <person name="Plengvidhya V."/>
            <person name="Welker D."/>
            <person name="Hughes J."/>
            <person name="Goh Y."/>
            <person name="Benson A."/>
            <person name="Baldwin K."/>
            <person name="Lee J.-H."/>
            <person name="Diaz-Muniz I."/>
            <person name="Dosti B."/>
            <person name="Smeianov V."/>
            <person name="Wechter W."/>
            <person name="Barabote R."/>
            <person name="Lorca G."/>
            <person name="Altermann E."/>
            <person name="Barrangou R."/>
            <person name="Ganesan B."/>
            <person name="Xie Y."/>
            <person name="Rawsthorne H."/>
            <person name="Tamir D."/>
            <person name="Parker C."/>
            <person name="Breidt F."/>
            <person name="Broadbent J.R."/>
            <person name="Hutkins R."/>
            <person name="O'Sullivan D."/>
            <person name="Steele J."/>
            <person name="Unlu G."/>
            <person name="Saier M.H. Jr."/>
            <person name="Klaenhammer T."/>
            <person name="Richardson P."/>
            <person name="Kozyavkin S."/>
            <person name="Weimer B.C."/>
            <person name="Mills D.A."/>
        </authorList>
    </citation>
    <scope>NUCLEOTIDE SEQUENCE [LARGE SCALE GENOMIC DNA]</scope>
    <source>
        <strain>ATCC BAA-331 / PSU-1</strain>
    </source>
</reference>
<keyword id="KW-0143">Chaperone</keyword>
<keyword id="KW-0963">Cytoplasm</keyword>
<keyword id="KW-1185">Reference proteome</keyword>
<keyword id="KW-0346">Stress response</keyword>
<organism>
    <name type="scientific">Oenococcus oeni (strain ATCC BAA-331 / PSU-1)</name>
    <dbReference type="NCBI Taxonomy" id="203123"/>
    <lineage>
        <taxon>Bacteria</taxon>
        <taxon>Bacillati</taxon>
        <taxon>Bacillota</taxon>
        <taxon>Bacilli</taxon>
        <taxon>Lactobacillales</taxon>
        <taxon>Lactobacillaceae</taxon>
        <taxon>Oenococcus</taxon>
    </lineage>
</organism>
<feature type="chain" id="PRO_1000065520" description="Protein GrpE">
    <location>
        <begin position="1"/>
        <end position="198"/>
    </location>
</feature>
<feature type="region of interest" description="Disordered" evidence="2">
    <location>
        <begin position="1"/>
        <end position="56"/>
    </location>
</feature>
<feature type="compositionally biased region" description="Basic and acidic residues" evidence="2">
    <location>
        <begin position="22"/>
        <end position="39"/>
    </location>
</feature>
<feature type="compositionally biased region" description="Low complexity" evidence="2">
    <location>
        <begin position="40"/>
        <end position="56"/>
    </location>
</feature>
<sequence length="198" mass="21716">MVEKKKSQAEKNNQSATEEEIEKAVKGSKRDSNAADEKNSASAAASSSAVSDAEPAVDYEDKFYRAEAEMQNMQQRFNKERASILKYEGQDLAKSILPALDNLERALSVSAGDPASKKIQDGVELTYKSLSNALTDNGIVKIGRAGDQFDPNLHNAIQKTPIDDPEKQKEGTIAVVLQKGYQLHDRVLRPAMVSVYTK</sequence>
<proteinExistence type="inferred from homology"/>